<name>KV224_HUMAN</name>
<comment type="function">
    <text evidence="5 6 7 8">V region of the variable domain of immunoglobulin light chains that participates in the antigen recognition (PubMed:24600447). Immunoglobulins, also known as antibodies, are membrane-bound or secreted glycoproteins produced by B lymphocytes. In the recognition phase of humoral immunity, the membrane-bound immunoglobulins serve as receptors which, upon binding of a specific antigen, trigger the clonal expansion and differentiation of B lymphocytes into immunoglobulins-secreting plasma cells. Secreted immunoglobulins mediate the effector phase of humoral immunity, which results in the elimination of bound antigens (PubMed:20176268, PubMed:22158414). The antigen binding site is formed by the variable domain of one heavy chain, together with that of its associated light chain. Thus, each immunoglobulin has two antigen binding sites with remarkable affinity for a particular antigen. The variable domains are assembled by a process called V-(D)-J rearrangement and can then be subjected to somatic hypermutations which, after exposure to antigen and selection, allow affinity maturation for a particular antigen (PubMed:17576170, PubMed:20176268).</text>
</comment>
<comment type="subunit">
    <text evidence="6">Immunoglobulins are composed of two identical heavy chains and two identical light chains; disulfide-linked.</text>
</comment>
<comment type="subcellular location">
    <subcellularLocation>
        <location evidence="6 7">Secreted</location>
    </subcellularLocation>
    <subcellularLocation>
        <location evidence="6 7">Cell membrane</location>
    </subcellularLocation>
</comment>
<comment type="polymorphism">
    <text>There are several alleles. The sequence shown is that of IMGT allele IGKV2-24*01.</text>
</comment>
<comment type="caution">
    <text evidence="10">For an example of a full-length immunoglobulin kappa light chain see AC P0DOX7.</text>
</comment>
<proteinExistence type="evidence at protein level"/>
<dbReference type="EMBL" id="AC245015">
    <property type="status" value="NOT_ANNOTATED_CDS"/>
    <property type="molecule type" value="Genomic_DNA"/>
</dbReference>
<dbReference type="EMDB" id="EMD-14783"/>
<dbReference type="SMR" id="A0A0C4DH68"/>
<dbReference type="FunCoup" id="A0A0C4DH68">
    <property type="interactions" value="256"/>
</dbReference>
<dbReference type="IntAct" id="A0A0C4DH68">
    <property type="interactions" value="1"/>
</dbReference>
<dbReference type="IMGT_GENE-DB" id="IGKV2-24"/>
<dbReference type="BioMuta" id="IGKV2-24"/>
<dbReference type="jPOST" id="A0A0C4DH68"/>
<dbReference type="MassIVE" id="A0A0C4DH68"/>
<dbReference type="Ensembl" id="ENST00000484817.1">
    <property type="protein sequence ID" value="ENSP00000419300.1"/>
    <property type="gene ID" value="ENSG00000241294.1"/>
</dbReference>
<dbReference type="Ensembl" id="ENST00000633851.1">
    <property type="protein sequence ID" value="ENSP00000488087.1"/>
    <property type="gene ID" value="ENSG00000282671.1"/>
</dbReference>
<dbReference type="AGR" id="HGNC:5781"/>
<dbReference type="GeneCards" id="IGKV2-24"/>
<dbReference type="HGNC" id="HGNC:5781">
    <property type="gene designation" value="IGKV2-24"/>
</dbReference>
<dbReference type="HPA" id="ENSG00000241294">
    <property type="expression patterns" value="Tissue enhanced (intestine, urinary bladder)"/>
</dbReference>
<dbReference type="neXtProt" id="NX_A0A0C4DH68"/>
<dbReference type="OpenTargets" id="ENSG00000241294"/>
<dbReference type="VEuPathDB" id="HostDB:ENSG00000241294"/>
<dbReference type="GeneTree" id="ENSGT00940000163554"/>
<dbReference type="HOGENOM" id="CLU_077975_4_1_1"/>
<dbReference type="InParanoid" id="A0A0C4DH68"/>
<dbReference type="OMA" id="NTYLNWI"/>
<dbReference type="OrthoDB" id="9585527at2759"/>
<dbReference type="PAN-GO" id="A0A0C4DH68">
    <property type="GO annotations" value="3 GO annotations based on evolutionary models"/>
</dbReference>
<dbReference type="PhylomeDB" id="A0A0C4DH68"/>
<dbReference type="ChiTaRS" id="IGKV2-24">
    <property type="organism name" value="human"/>
</dbReference>
<dbReference type="Pharos" id="A0A0C4DH68">
    <property type="development level" value="Tdark"/>
</dbReference>
<dbReference type="PRO" id="PR:A0A0C4DH68"/>
<dbReference type="Proteomes" id="UP000005640">
    <property type="component" value="Chromosome 2"/>
</dbReference>
<dbReference type="RNAct" id="A0A0C4DH68">
    <property type="molecule type" value="protein"/>
</dbReference>
<dbReference type="Bgee" id="ENSG00000241294">
    <property type="expression patterns" value="Expressed in rectum and 91 other cell types or tissues"/>
</dbReference>
<dbReference type="GO" id="GO:0005576">
    <property type="term" value="C:extracellular region"/>
    <property type="evidence" value="ECO:0007669"/>
    <property type="project" value="UniProtKB-SubCell"/>
</dbReference>
<dbReference type="GO" id="GO:0019814">
    <property type="term" value="C:immunoglobulin complex"/>
    <property type="evidence" value="ECO:0000318"/>
    <property type="project" value="GO_Central"/>
</dbReference>
<dbReference type="GO" id="GO:0005886">
    <property type="term" value="C:plasma membrane"/>
    <property type="evidence" value="ECO:0007669"/>
    <property type="project" value="UniProtKB-SubCell"/>
</dbReference>
<dbReference type="GO" id="GO:0002250">
    <property type="term" value="P:adaptive immune response"/>
    <property type="evidence" value="ECO:0007669"/>
    <property type="project" value="UniProtKB-KW"/>
</dbReference>
<dbReference type="GO" id="GO:0006955">
    <property type="term" value="P:immune response"/>
    <property type="evidence" value="ECO:0000318"/>
    <property type="project" value="GO_Central"/>
</dbReference>
<dbReference type="FunFam" id="2.60.40.10:FF:000365">
    <property type="entry name" value="If kappa light chain"/>
    <property type="match status" value="1"/>
</dbReference>
<dbReference type="Gene3D" id="2.60.40.10">
    <property type="entry name" value="Immunoglobulins"/>
    <property type="match status" value="1"/>
</dbReference>
<dbReference type="InterPro" id="IPR007110">
    <property type="entry name" value="Ig-like_dom"/>
</dbReference>
<dbReference type="InterPro" id="IPR036179">
    <property type="entry name" value="Ig-like_dom_sf"/>
</dbReference>
<dbReference type="InterPro" id="IPR013783">
    <property type="entry name" value="Ig-like_fold"/>
</dbReference>
<dbReference type="InterPro" id="IPR013106">
    <property type="entry name" value="Ig_V-set"/>
</dbReference>
<dbReference type="InterPro" id="IPR050150">
    <property type="entry name" value="IgV_Light_Chain"/>
</dbReference>
<dbReference type="PANTHER" id="PTHR23267">
    <property type="entry name" value="IMMUNOGLOBULIN LIGHT CHAIN"/>
    <property type="match status" value="1"/>
</dbReference>
<dbReference type="Pfam" id="PF07686">
    <property type="entry name" value="V-set"/>
    <property type="match status" value="1"/>
</dbReference>
<dbReference type="SMART" id="SM00406">
    <property type="entry name" value="IGv"/>
    <property type="match status" value="1"/>
</dbReference>
<dbReference type="SUPFAM" id="SSF48726">
    <property type="entry name" value="Immunoglobulin"/>
    <property type="match status" value="1"/>
</dbReference>
<dbReference type="PROSITE" id="PS50835">
    <property type="entry name" value="IG_LIKE"/>
    <property type="match status" value="1"/>
</dbReference>
<reference key="1">
    <citation type="journal article" date="2005" name="Nature">
        <title>Generation and annotation of the DNA sequences of human chromosomes 2 and 4.</title>
        <authorList>
            <person name="Hillier L.W."/>
            <person name="Graves T.A."/>
            <person name="Fulton R.S."/>
            <person name="Fulton L.A."/>
            <person name="Pepin K.H."/>
            <person name="Minx P."/>
            <person name="Wagner-McPherson C."/>
            <person name="Layman D."/>
            <person name="Wylie K."/>
            <person name="Sekhon M."/>
            <person name="Becker M.C."/>
            <person name="Fewell G.A."/>
            <person name="Delehaunty K.D."/>
            <person name="Miner T.L."/>
            <person name="Nash W.E."/>
            <person name="Kremitzki C."/>
            <person name="Oddy L."/>
            <person name="Du H."/>
            <person name="Sun H."/>
            <person name="Bradshaw-Cordum H."/>
            <person name="Ali J."/>
            <person name="Carter J."/>
            <person name="Cordes M."/>
            <person name="Harris A."/>
            <person name="Isak A."/>
            <person name="van Brunt A."/>
            <person name="Nguyen C."/>
            <person name="Du F."/>
            <person name="Courtney L."/>
            <person name="Kalicki J."/>
            <person name="Ozersky P."/>
            <person name="Abbott S."/>
            <person name="Armstrong J."/>
            <person name="Belter E.A."/>
            <person name="Caruso L."/>
            <person name="Cedroni M."/>
            <person name="Cotton M."/>
            <person name="Davidson T."/>
            <person name="Desai A."/>
            <person name="Elliott G."/>
            <person name="Erb T."/>
            <person name="Fronick C."/>
            <person name="Gaige T."/>
            <person name="Haakenson W."/>
            <person name="Haglund K."/>
            <person name="Holmes A."/>
            <person name="Harkins R."/>
            <person name="Kim K."/>
            <person name="Kruchowski S.S."/>
            <person name="Strong C.M."/>
            <person name="Grewal N."/>
            <person name="Goyea E."/>
            <person name="Hou S."/>
            <person name="Levy A."/>
            <person name="Martinka S."/>
            <person name="Mead K."/>
            <person name="McLellan M.D."/>
            <person name="Meyer R."/>
            <person name="Randall-Maher J."/>
            <person name="Tomlinson C."/>
            <person name="Dauphin-Kohlberg S."/>
            <person name="Kozlowicz-Reilly A."/>
            <person name="Shah N."/>
            <person name="Swearengen-Shahid S."/>
            <person name="Snider J."/>
            <person name="Strong J.T."/>
            <person name="Thompson J."/>
            <person name="Yoakum M."/>
            <person name="Leonard S."/>
            <person name="Pearman C."/>
            <person name="Trani L."/>
            <person name="Radionenko M."/>
            <person name="Waligorski J.E."/>
            <person name="Wang C."/>
            <person name="Rock S.M."/>
            <person name="Tin-Wollam A.-M."/>
            <person name="Maupin R."/>
            <person name="Latreille P."/>
            <person name="Wendl M.C."/>
            <person name="Yang S.-P."/>
            <person name="Pohl C."/>
            <person name="Wallis J.W."/>
            <person name="Spieth J."/>
            <person name="Bieri T.A."/>
            <person name="Berkowicz N."/>
            <person name="Nelson J.O."/>
            <person name="Osborne J."/>
            <person name="Ding L."/>
            <person name="Meyer R."/>
            <person name="Sabo A."/>
            <person name="Shotland Y."/>
            <person name="Sinha P."/>
            <person name="Wohldmann P.E."/>
            <person name="Cook L.L."/>
            <person name="Hickenbotham M.T."/>
            <person name="Eldred J."/>
            <person name="Williams D."/>
            <person name="Jones T.A."/>
            <person name="She X."/>
            <person name="Ciccarelli F.D."/>
            <person name="Izaurralde E."/>
            <person name="Taylor J."/>
            <person name="Schmutz J."/>
            <person name="Myers R.M."/>
            <person name="Cox D.R."/>
            <person name="Huang X."/>
            <person name="McPherson J.D."/>
            <person name="Mardis E.R."/>
            <person name="Clifton S.W."/>
            <person name="Warren W.C."/>
            <person name="Chinwalla A.T."/>
            <person name="Eddy S.R."/>
            <person name="Marra M.A."/>
            <person name="Ovcharenko I."/>
            <person name="Furey T.S."/>
            <person name="Miller W."/>
            <person name="Eichler E.E."/>
            <person name="Bork P."/>
            <person name="Suyama M."/>
            <person name="Torrents D."/>
            <person name="Waterston R.H."/>
            <person name="Wilson R.K."/>
        </authorList>
    </citation>
    <scope>NUCLEOTIDE SEQUENCE [LARGE SCALE GENOMIC DNA] (IMGT ALLELE IGKV2-24*01)</scope>
</reference>
<reference key="2">
    <citation type="journal article" date="2001" name="Exp. Clin. Immunogenet.">
        <title>Nomenclature of the human immunoglobulin kappa (IGK) genes.</title>
        <authorList>
            <person name="Lefranc M.P."/>
        </authorList>
    </citation>
    <scope>NOMEMCLATURE</scope>
</reference>
<reference key="3">
    <citation type="book" date="2001" name="The Immunoglobulin FactsBook.">
        <title>The Immunoglobulin FactsBook.</title>
        <editorList>
            <person name="Lefranc M.P."/>
            <person name="Lefranc G."/>
        </editorList>
        <authorList>
            <person name="Lefranc M.P."/>
            <person name="Lefranc G."/>
        </authorList>
    </citation>
    <scope>NOMENCLATURE</scope>
</reference>
<reference key="4">
    <citation type="journal article" date="2007" name="Annu. Rev. Genet.">
        <title>Immunoglobulin somatic hypermutation.</title>
        <authorList>
            <person name="Teng G."/>
            <person name="Papavasiliou F.N."/>
        </authorList>
    </citation>
    <scope>REVIEW ON SOMATIC HYPERMUTATION</scope>
</reference>
<reference key="5">
    <citation type="journal article" date="2010" name="J. Allergy Clin. Immunol.">
        <title>Structure and function of immunoglobulins.</title>
        <authorList>
            <person name="Schroeder H.W. Jr."/>
            <person name="Cavacini L."/>
        </authorList>
    </citation>
    <scope>REVIEW ON IMMUNOGLOBULINS</scope>
</reference>
<reference key="6">
    <citation type="journal article" date="2012" name="Nat. Rev. Immunol.">
        <title>Molecular programming of B cell memory.</title>
        <authorList>
            <person name="McHeyzer-Williams M."/>
            <person name="Okitsu S."/>
            <person name="Wang N."/>
            <person name="McHeyzer-Williams L."/>
        </authorList>
    </citation>
    <scope>REVIEW ON FUNCTION</scope>
</reference>
<reference key="7">
    <citation type="journal article" date="2014" name="Front. Immunol.">
        <title>Immunoglobulin and T Cell Receptor Genes: IMGT((R)) and the Birth and Rise of Immunoinformatics.</title>
        <authorList>
            <person name="Lefranc M.P."/>
        </authorList>
    </citation>
    <scope>NOMENCLATURE</scope>
</reference>
<feature type="signal peptide" evidence="2">
    <location>
        <begin position="1"/>
        <end position="19"/>
    </location>
</feature>
<feature type="chain" id="PRO_5002170238" description="Immunoglobulin kappa variable 2-24" evidence="2">
    <location>
        <begin position="20"/>
        <end position="120"/>
    </location>
</feature>
<feature type="domain" description="Ig-like" evidence="3">
    <location>
        <begin position="20"/>
        <end position="120" status="greater than"/>
    </location>
</feature>
<feature type="region of interest" description="Framework-1" evidence="1">
    <location>
        <begin position="21"/>
        <end position="43"/>
    </location>
</feature>
<feature type="region of interest" description="Complementarity-determining-1" evidence="1">
    <location>
        <begin position="44"/>
        <end position="59"/>
    </location>
</feature>
<feature type="region of interest" description="Framework-2" evidence="1">
    <location>
        <begin position="60"/>
        <end position="74"/>
    </location>
</feature>
<feature type="region of interest" description="Complementarity-determining-2" evidence="1">
    <location>
        <begin position="75"/>
        <end position="81"/>
    </location>
</feature>
<feature type="region of interest" description="Framework-3" evidence="1">
    <location>
        <begin position="82"/>
        <end position="113"/>
    </location>
</feature>
<feature type="region of interest" description="Complementarity-determining-3" evidence="1">
    <location>
        <begin position="114"/>
        <end position="120" status="greater than"/>
    </location>
</feature>
<feature type="disulfide bond" evidence="3">
    <location>
        <begin position="43"/>
        <end position="113"/>
    </location>
</feature>
<feature type="non-terminal residue">
    <location>
        <position position="120"/>
    </location>
</feature>
<evidence type="ECO:0000250" key="1">
    <source>
        <dbReference type="UniProtKB" id="P01602"/>
    </source>
</evidence>
<evidence type="ECO:0000255" key="2"/>
<evidence type="ECO:0000255" key="3">
    <source>
        <dbReference type="PROSITE-ProRule" id="PRU00114"/>
    </source>
</evidence>
<evidence type="ECO:0000303" key="4">
    <source>
    </source>
</evidence>
<evidence type="ECO:0000303" key="5">
    <source>
    </source>
</evidence>
<evidence type="ECO:0000303" key="6">
    <source>
    </source>
</evidence>
<evidence type="ECO:0000303" key="7">
    <source>
    </source>
</evidence>
<evidence type="ECO:0000303" key="8">
    <source>
    </source>
</evidence>
<evidence type="ECO:0000303" key="9">
    <source ref="3"/>
</evidence>
<evidence type="ECO:0000305" key="10"/>
<sequence length="120" mass="13079">MRLLAQLLGLLMLWVPGSSGDIVMTQTPLSSPVTLGQPASISCRSSQSLVHSDGNTYLSWLQQRPGQPPRLLIYKISNRFSGVPDRFSGSGAGTDFTLKISRVEAEDVGVYYCMQATQFP</sequence>
<gene>
    <name evidence="4 9" type="primary">IGKV2-24</name>
</gene>
<protein>
    <recommendedName>
        <fullName evidence="4 9">Immunoglobulin kappa variable 2-24</fullName>
    </recommendedName>
</protein>
<accession>A0A0C4DH68</accession>
<keyword id="KW-1064">Adaptive immunity</keyword>
<keyword id="KW-1003">Cell membrane</keyword>
<keyword id="KW-1015">Disulfide bond</keyword>
<keyword id="KW-0391">Immunity</keyword>
<keyword id="KW-1280">Immunoglobulin</keyword>
<keyword id="KW-0393">Immunoglobulin domain</keyword>
<keyword id="KW-0472">Membrane</keyword>
<keyword id="KW-1267">Proteomics identification</keyword>
<keyword id="KW-1185">Reference proteome</keyword>
<keyword id="KW-0964">Secreted</keyword>
<keyword id="KW-0732">Signal</keyword>
<organism>
    <name type="scientific">Homo sapiens</name>
    <name type="common">Human</name>
    <dbReference type="NCBI Taxonomy" id="9606"/>
    <lineage>
        <taxon>Eukaryota</taxon>
        <taxon>Metazoa</taxon>
        <taxon>Chordata</taxon>
        <taxon>Craniata</taxon>
        <taxon>Vertebrata</taxon>
        <taxon>Euteleostomi</taxon>
        <taxon>Mammalia</taxon>
        <taxon>Eutheria</taxon>
        <taxon>Euarchontoglires</taxon>
        <taxon>Primates</taxon>
        <taxon>Haplorrhini</taxon>
        <taxon>Catarrhini</taxon>
        <taxon>Hominidae</taxon>
        <taxon>Homo</taxon>
    </lineage>
</organism>